<dbReference type="EMBL" id="CP000806">
    <property type="protein sequence ID" value="ACB52696.1"/>
    <property type="molecule type" value="Genomic_DNA"/>
</dbReference>
<dbReference type="RefSeq" id="WP_009545479.1">
    <property type="nucleotide sequence ID" value="NC_010546.1"/>
</dbReference>
<dbReference type="STRING" id="43989.cce_3348"/>
<dbReference type="KEGG" id="cyt:cce_3348"/>
<dbReference type="eggNOG" id="COG0267">
    <property type="taxonomic scope" value="Bacteria"/>
</dbReference>
<dbReference type="HOGENOM" id="CLU_190949_3_0_3"/>
<dbReference type="OrthoDB" id="9801333at2"/>
<dbReference type="Proteomes" id="UP000001203">
    <property type="component" value="Chromosome circular"/>
</dbReference>
<dbReference type="GO" id="GO:0005737">
    <property type="term" value="C:cytoplasm"/>
    <property type="evidence" value="ECO:0007669"/>
    <property type="project" value="UniProtKB-ARBA"/>
</dbReference>
<dbReference type="GO" id="GO:1990904">
    <property type="term" value="C:ribonucleoprotein complex"/>
    <property type="evidence" value="ECO:0007669"/>
    <property type="project" value="UniProtKB-KW"/>
</dbReference>
<dbReference type="GO" id="GO:0005840">
    <property type="term" value="C:ribosome"/>
    <property type="evidence" value="ECO:0007669"/>
    <property type="project" value="UniProtKB-KW"/>
</dbReference>
<dbReference type="GO" id="GO:0003735">
    <property type="term" value="F:structural constituent of ribosome"/>
    <property type="evidence" value="ECO:0007669"/>
    <property type="project" value="InterPro"/>
</dbReference>
<dbReference type="GO" id="GO:0006412">
    <property type="term" value="P:translation"/>
    <property type="evidence" value="ECO:0007669"/>
    <property type="project" value="UniProtKB-UniRule"/>
</dbReference>
<dbReference type="Gene3D" id="2.20.28.120">
    <property type="entry name" value="Ribosomal protein L33"/>
    <property type="match status" value="1"/>
</dbReference>
<dbReference type="HAMAP" id="MF_00294">
    <property type="entry name" value="Ribosomal_bL33"/>
    <property type="match status" value="1"/>
</dbReference>
<dbReference type="InterPro" id="IPR001705">
    <property type="entry name" value="Ribosomal_bL33"/>
</dbReference>
<dbReference type="InterPro" id="IPR018264">
    <property type="entry name" value="Ribosomal_bL33_CS"/>
</dbReference>
<dbReference type="InterPro" id="IPR038584">
    <property type="entry name" value="Ribosomal_bL33_sf"/>
</dbReference>
<dbReference type="InterPro" id="IPR011332">
    <property type="entry name" value="Ribosomal_zn-bd"/>
</dbReference>
<dbReference type="NCBIfam" id="NF001764">
    <property type="entry name" value="PRK00504.1"/>
    <property type="match status" value="1"/>
</dbReference>
<dbReference type="NCBIfam" id="NF001860">
    <property type="entry name" value="PRK00595.1"/>
    <property type="match status" value="1"/>
</dbReference>
<dbReference type="NCBIfam" id="TIGR01023">
    <property type="entry name" value="rpmG_bact"/>
    <property type="match status" value="1"/>
</dbReference>
<dbReference type="PANTHER" id="PTHR43168">
    <property type="entry name" value="50S RIBOSOMAL PROTEIN L33, CHLOROPLASTIC"/>
    <property type="match status" value="1"/>
</dbReference>
<dbReference type="PANTHER" id="PTHR43168:SF2">
    <property type="entry name" value="LARGE RIBOSOMAL SUBUNIT PROTEIN BL33C"/>
    <property type="match status" value="1"/>
</dbReference>
<dbReference type="Pfam" id="PF00471">
    <property type="entry name" value="Ribosomal_L33"/>
    <property type="match status" value="1"/>
</dbReference>
<dbReference type="SUPFAM" id="SSF57829">
    <property type="entry name" value="Zn-binding ribosomal proteins"/>
    <property type="match status" value="1"/>
</dbReference>
<dbReference type="PROSITE" id="PS00582">
    <property type="entry name" value="RIBOSOMAL_L33"/>
    <property type="match status" value="1"/>
</dbReference>
<name>RL33_CROS5</name>
<keyword id="KW-1185">Reference proteome</keyword>
<keyword id="KW-0687">Ribonucleoprotein</keyword>
<keyword id="KW-0689">Ribosomal protein</keyword>
<organism>
    <name type="scientific">Crocosphaera subtropica (strain ATCC 51142 / BH68)</name>
    <name type="common">Cyanothece sp. (strain ATCC 51142)</name>
    <dbReference type="NCBI Taxonomy" id="43989"/>
    <lineage>
        <taxon>Bacteria</taxon>
        <taxon>Bacillati</taxon>
        <taxon>Cyanobacteriota</taxon>
        <taxon>Cyanophyceae</taxon>
        <taxon>Oscillatoriophycideae</taxon>
        <taxon>Chroococcales</taxon>
        <taxon>Aphanothecaceae</taxon>
        <taxon>Crocosphaera</taxon>
        <taxon>Crocosphaera subtropica</taxon>
    </lineage>
</organism>
<sequence length="64" mass="7402">MASKKGVRLIITLECTECRTNTNKRSPGVNRYTTSKNRRNTTGRIELKKFCPHCNTHTVHKEIK</sequence>
<comment type="similarity">
    <text evidence="1">Belongs to the bacterial ribosomal protein bL33 family.</text>
</comment>
<evidence type="ECO:0000255" key="1">
    <source>
        <dbReference type="HAMAP-Rule" id="MF_00294"/>
    </source>
</evidence>
<evidence type="ECO:0000305" key="2"/>
<protein>
    <recommendedName>
        <fullName evidence="1">Large ribosomal subunit protein bL33</fullName>
    </recommendedName>
    <alternativeName>
        <fullName evidence="2">50S ribosomal protein L33</fullName>
    </alternativeName>
</protein>
<reference key="1">
    <citation type="journal article" date="2008" name="Proc. Natl. Acad. Sci. U.S.A.">
        <title>The genome of Cyanothece 51142, a unicellular diazotrophic cyanobacterium important in the marine nitrogen cycle.</title>
        <authorList>
            <person name="Welsh E.A."/>
            <person name="Liberton M."/>
            <person name="Stoeckel J."/>
            <person name="Loh T."/>
            <person name="Elvitigala T."/>
            <person name="Wang C."/>
            <person name="Wollam A."/>
            <person name="Fulton R.S."/>
            <person name="Clifton S.W."/>
            <person name="Jacobs J.M."/>
            <person name="Aurora R."/>
            <person name="Ghosh B.K."/>
            <person name="Sherman L.A."/>
            <person name="Smith R.D."/>
            <person name="Wilson R.K."/>
            <person name="Pakrasi H.B."/>
        </authorList>
    </citation>
    <scope>NUCLEOTIDE SEQUENCE [LARGE SCALE GENOMIC DNA]</scope>
    <source>
        <strain>ATCC 51142 / BH68</strain>
    </source>
</reference>
<feature type="chain" id="PRO_1000115127" description="Large ribosomal subunit protein bL33">
    <location>
        <begin position="1"/>
        <end position="64"/>
    </location>
</feature>
<accession>B1WYB2</accession>
<gene>
    <name evidence="1" type="primary">rpmG</name>
    <name evidence="1" type="synonym">rpl33</name>
    <name type="ordered locus">cce_3348</name>
</gene>
<proteinExistence type="inferred from homology"/>